<keyword id="KW-0028">Amino-acid biosynthesis</keyword>
<keyword id="KW-0055">Arginine biosynthesis</keyword>
<keyword id="KW-0963">Cytoplasm</keyword>
<keyword id="KW-0521">NADP</keyword>
<keyword id="KW-0560">Oxidoreductase</keyword>
<accession>Q02TA4</accession>
<name>ARGC_PSEAB</name>
<proteinExistence type="inferred from homology"/>
<organism>
    <name type="scientific">Pseudomonas aeruginosa (strain UCBPP-PA14)</name>
    <dbReference type="NCBI Taxonomy" id="208963"/>
    <lineage>
        <taxon>Bacteria</taxon>
        <taxon>Pseudomonadati</taxon>
        <taxon>Pseudomonadota</taxon>
        <taxon>Gammaproteobacteria</taxon>
        <taxon>Pseudomonadales</taxon>
        <taxon>Pseudomonadaceae</taxon>
        <taxon>Pseudomonas</taxon>
    </lineage>
</organism>
<dbReference type="EC" id="1.2.1.38" evidence="1"/>
<dbReference type="EMBL" id="CP000438">
    <property type="protein sequence ID" value="ABJ15623.1"/>
    <property type="molecule type" value="Genomic_DNA"/>
</dbReference>
<dbReference type="RefSeq" id="WP_003137420.1">
    <property type="nucleotide sequence ID" value="NZ_CP034244.1"/>
</dbReference>
<dbReference type="SMR" id="Q02TA4"/>
<dbReference type="KEGG" id="pau:PA14_08480"/>
<dbReference type="PseudoCAP" id="PA14_08480"/>
<dbReference type="HOGENOM" id="CLU_006384_0_1_6"/>
<dbReference type="BioCyc" id="PAER208963:G1G74-703-MONOMER"/>
<dbReference type="UniPathway" id="UPA00068">
    <property type="reaction ID" value="UER00108"/>
</dbReference>
<dbReference type="Proteomes" id="UP000000653">
    <property type="component" value="Chromosome"/>
</dbReference>
<dbReference type="GO" id="GO:0005737">
    <property type="term" value="C:cytoplasm"/>
    <property type="evidence" value="ECO:0007669"/>
    <property type="project" value="UniProtKB-SubCell"/>
</dbReference>
<dbReference type="GO" id="GO:0003942">
    <property type="term" value="F:N-acetyl-gamma-glutamyl-phosphate reductase activity"/>
    <property type="evidence" value="ECO:0007669"/>
    <property type="project" value="UniProtKB-UniRule"/>
</dbReference>
<dbReference type="GO" id="GO:0051287">
    <property type="term" value="F:NAD binding"/>
    <property type="evidence" value="ECO:0007669"/>
    <property type="project" value="InterPro"/>
</dbReference>
<dbReference type="GO" id="GO:0070401">
    <property type="term" value="F:NADP+ binding"/>
    <property type="evidence" value="ECO:0007669"/>
    <property type="project" value="InterPro"/>
</dbReference>
<dbReference type="GO" id="GO:0006526">
    <property type="term" value="P:L-arginine biosynthetic process"/>
    <property type="evidence" value="ECO:0007669"/>
    <property type="project" value="UniProtKB-UniRule"/>
</dbReference>
<dbReference type="CDD" id="cd23934">
    <property type="entry name" value="AGPR_1_C"/>
    <property type="match status" value="1"/>
</dbReference>
<dbReference type="CDD" id="cd17895">
    <property type="entry name" value="AGPR_1_N"/>
    <property type="match status" value="1"/>
</dbReference>
<dbReference type="FunFam" id="3.30.360.10:FF:000014">
    <property type="entry name" value="N-acetyl-gamma-glutamyl-phosphate reductase"/>
    <property type="match status" value="1"/>
</dbReference>
<dbReference type="Gene3D" id="3.30.360.10">
    <property type="entry name" value="Dihydrodipicolinate Reductase, domain 2"/>
    <property type="match status" value="1"/>
</dbReference>
<dbReference type="Gene3D" id="3.40.50.720">
    <property type="entry name" value="NAD(P)-binding Rossmann-like Domain"/>
    <property type="match status" value="1"/>
</dbReference>
<dbReference type="HAMAP" id="MF_00150">
    <property type="entry name" value="ArgC_type1"/>
    <property type="match status" value="1"/>
</dbReference>
<dbReference type="InterPro" id="IPR023013">
    <property type="entry name" value="AGPR_AS"/>
</dbReference>
<dbReference type="InterPro" id="IPR000706">
    <property type="entry name" value="AGPR_type-1"/>
</dbReference>
<dbReference type="InterPro" id="IPR036291">
    <property type="entry name" value="NAD(P)-bd_dom_sf"/>
</dbReference>
<dbReference type="InterPro" id="IPR050085">
    <property type="entry name" value="NAGSA_dehydrogenase"/>
</dbReference>
<dbReference type="InterPro" id="IPR000534">
    <property type="entry name" value="Semialdehyde_DH_NAD-bd"/>
</dbReference>
<dbReference type="NCBIfam" id="TIGR01850">
    <property type="entry name" value="argC"/>
    <property type="match status" value="1"/>
</dbReference>
<dbReference type="PANTHER" id="PTHR32338:SF10">
    <property type="entry name" value="N-ACETYL-GAMMA-GLUTAMYL-PHOSPHATE REDUCTASE, CHLOROPLASTIC-RELATED"/>
    <property type="match status" value="1"/>
</dbReference>
<dbReference type="PANTHER" id="PTHR32338">
    <property type="entry name" value="N-ACETYL-GAMMA-GLUTAMYL-PHOSPHATE REDUCTASE, CHLOROPLASTIC-RELATED-RELATED"/>
    <property type="match status" value="1"/>
</dbReference>
<dbReference type="Pfam" id="PF01118">
    <property type="entry name" value="Semialdhyde_dh"/>
    <property type="match status" value="1"/>
</dbReference>
<dbReference type="Pfam" id="PF22698">
    <property type="entry name" value="Semialdhyde_dhC_1"/>
    <property type="match status" value="1"/>
</dbReference>
<dbReference type="SMART" id="SM00859">
    <property type="entry name" value="Semialdhyde_dh"/>
    <property type="match status" value="1"/>
</dbReference>
<dbReference type="SUPFAM" id="SSF55347">
    <property type="entry name" value="Glyceraldehyde-3-phosphate dehydrogenase-like, C-terminal domain"/>
    <property type="match status" value="1"/>
</dbReference>
<dbReference type="SUPFAM" id="SSF51735">
    <property type="entry name" value="NAD(P)-binding Rossmann-fold domains"/>
    <property type="match status" value="1"/>
</dbReference>
<dbReference type="PROSITE" id="PS01224">
    <property type="entry name" value="ARGC"/>
    <property type="match status" value="1"/>
</dbReference>
<gene>
    <name evidence="1" type="primary">argC</name>
    <name type="ordered locus">PA14_08480</name>
</gene>
<sequence>MIKVGIVGGTGYTGVELLRLLAQHPQARVEVITSRSEAGVKVADMYPNLRGHYDDLQFSVPDVQRLGACDVVFFATPHGVAHALAGELLDAGTRVIDLSADFRLADAEEWARWYGQPHGAPALLDEAVYGLPEVNREKIRQARLIAVPGCYPTATQLGLIPLLEAGLADASRLIADCKSGVSGAGRGAKVGSLFCEAGESMMAYAVKGHRHLPEISQGLCRASGGDVGLTFVPHLTPMIRGIHATLYAHVADRSVDLQALFEKRYADEPFVDVMPAGSHPETRSVRGANVCRIAVHRPQGGDLVVVLSVIDNLVKGASGQALQNMNILFGLDERLGLSHAALLP</sequence>
<protein>
    <recommendedName>
        <fullName evidence="1">N-acetyl-gamma-glutamyl-phosphate reductase</fullName>
        <shortName evidence="1">AGPR</shortName>
        <ecNumber evidence="1">1.2.1.38</ecNumber>
    </recommendedName>
    <alternativeName>
        <fullName evidence="1">N-acetyl-glutamate semialdehyde dehydrogenase</fullName>
        <shortName evidence="1">NAGSA dehydrogenase</shortName>
    </alternativeName>
</protein>
<evidence type="ECO:0000255" key="1">
    <source>
        <dbReference type="HAMAP-Rule" id="MF_00150"/>
    </source>
</evidence>
<comment type="function">
    <text evidence="1">Catalyzes the NADPH-dependent reduction of N-acetyl-5-glutamyl phosphate to yield N-acetyl-L-glutamate 5-semialdehyde.</text>
</comment>
<comment type="catalytic activity">
    <reaction evidence="1">
        <text>N-acetyl-L-glutamate 5-semialdehyde + phosphate + NADP(+) = N-acetyl-L-glutamyl 5-phosphate + NADPH + H(+)</text>
        <dbReference type="Rhea" id="RHEA:21588"/>
        <dbReference type="ChEBI" id="CHEBI:15378"/>
        <dbReference type="ChEBI" id="CHEBI:29123"/>
        <dbReference type="ChEBI" id="CHEBI:43474"/>
        <dbReference type="ChEBI" id="CHEBI:57783"/>
        <dbReference type="ChEBI" id="CHEBI:57936"/>
        <dbReference type="ChEBI" id="CHEBI:58349"/>
        <dbReference type="EC" id="1.2.1.38"/>
    </reaction>
</comment>
<comment type="pathway">
    <text evidence="1">Amino-acid biosynthesis; L-arginine biosynthesis; N(2)-acetyl-L-ornithine from L-glutamate: step 3/4.</text>
</comment>
<comment type="subcellular location">
    <subcellularLocation>
        <location evidence="1">Cytoplasm</location>
    </subcellularLocation>
</comment>
<comment type="similarity">
    <text evidence="1">Belongs to the NAGSA dehydrogenase family. Type 1 subfamily.</text>
</comment>
<reference key="1">
    <citation type="journal article" date="2006" name="Genome Biol.">
        <title>Genomic analysis reveals that Pseudomonas aeruginosa virulence is combinatorial.</title>
        <authorList>
            <person name="Lee D.G."/>
            <person name="Urbach J.M."/>
            <person name="Wu G."/>
            <person name="Liberati N.T."/>
            <person name="Feinbaum R.L."/>
            <person name="Miyata S."/>
            <person name="Diggins L.T."/>
            <person name="He J."/>
            <person name="Saucier M."/>
            <person name="Deziel E."/>
            <person name="Friedman L."/>
            <person name="Li L."/>
            <person name="Grills G."/>
            <person name="Montgomery K."/>
            <person name="Kucherlapati R."/>
            <person name="Rahme L.G."/>
            <person name="Ausubel F.M."/>
        </authorList>
    </citation>
    <scope>NUCLEOTIDE SEQUENCE [LARGE SCALE GENOMIC DNA]</scope>
    <source>
        <strain>UCBPP-PA14</strain>
    </source>
</reference>
<feature type="chain" id="PRO_1000011040" description="N-acetyl-gamma-glutamyl-phosphate reductase">
    <location>
        <begin position="1"/>
        <end position="344"/>
    </location>
</feature>
<feature type="active site" evidence="1">
    <location>
        <position position="150"/>
    </location>
</feature>